<keyword id="KW-0678">Repressor</keyword>
<keyword id="KW-0687">Ribonucleoprotein</keyword>
<keyword id="KW-0689">Ribosomal protein</keyword>
<keyword id="KW-0694">RNA-binding</keyword>
<keyword id="KW-0699">rRNA-binding</keyword>
<keyword id="KW-0810">Translation regulation</keyword>
<keyword id="KW-0820">tRNA-binding</keyword>
<organism>
    <name type="scientific">Staphylococcus aureus (strain MW2)</name>
    <dbReference type="NCBI Taxonomy" id="196620"/>
    <lineage>
        <taxon>Bacteria</taxon>
        <taxon>Bacillati</taxon>
        <taxon>Bacillota</taxon>
        <taxon>Bacilli</taxon>
        <taxon>Bacillales</taxon>
        <taxon>Staphylococcaceae</taxon>
        <taxon>Staphylococcus</taxon>
    </lineage>
</organism>
<comment type="function">
    <text evidence="1">Binds directly to 23S rRNA. The L1 stalk is quite mobile in the ribosome, and is involved in E site tRNA release.</text>
</comment>
<comment type="function">
    <text evidence="1">Protein L1 is also a translational repressor protein, it controls the translation of the L11 operon by binding to its mRNA.</text>
</comment>
<comment type="subunit">
    <text evidence="1">Part of the 50S ribosomal subunit.</text>
</comment>
<comment type="similarity">
    <text evidence="1">Belongs to the universal ribosomal protein uL1 family.</text>
</comment>
<sequence length="230" mass="24708">MAKKGKKYQEAASKVDRTQHYSVEEAIKLAKETSIANFDASVEVAFRLGIDTRKNDQQIRGAVVLPNGTGKSQSVLVFAKGDKIAEAEAAGADYVGEAEYVQKIQQGWFDFDVVVATPDMMGEVGKLGRVLGPKGLMPNPKTGTVTMDVKKAVEEIKAGKVEYRAEKAGIVHASIGKVSFTDEQLIENFNTLQDVLAKAKPSSAKGTYFKSVAVTTTMGPGVKIDTASFK</sequence>
<protein>
    <recommendedName>
        <fullName evidence="1">Large ribosomal subunit protein uL1</fullName>
    </recommendedName>
    <alternativeName>
        <fullName evidence="2">50S ribosomal protein L1</fullName>
    </alternativeName>
</protein>
<dbReference type="EMBL" id="BA000033">
    <property type="protein sequence ID" value="BAB94358.1"/>
    <property type="molecule type" value="Genomic_DNA"/>
</dbReference>
<dbReference type="RefSeq" id="WP_001074619.1">
    <property type="nucleotide sequence ID" value="NC_003923.1"/>
</dbReference>
<dbReference type="SMR" id="P66092"/>
<dbReference type="GeneID" id="98344872"/>
<dbReference type="KEGG" id="sam:MW0493"/>
<dbReference type="HOGENOM" id="CLU_062853_0_0_9"/>
<dbReference type="GO" id="GO:0015934">
    <property type="term" value="C:large ribosomal subunit"/>
    <property type="evidence" value="ECO:0007669"/>
    <property type="project" value="InterPro"/>
</dbReference>
<dbReference type="GO" id="GO:0019843">
    <property type="term" value="F:rRNA binding"/>
    <property type="evidence" value="ECO:0007669"/>
    <property type="project" value="UniProtKB-UniRule"/>
</dbReference>
<dbReference type="GO" id="GO:0003735">
    <property type="term" value="F:structural constituent of ribosome"/>
    <property type="evidence" value="ECO:0007669"/>
    <property type="project" value="InterPro"/>
</dbReference>
<dbReference type="GO" id="GO:0000049">
    <property type="term" value="F:tRNA binding"/>
    <property type="evidence" value="ECO:0007669"/>
    <property type="project" value="UniProtKB-KW"/>
</dbReference>
<dbReference type="GO" id="GO:0006417">
    <property type="term" value="P:regulation of translation"/>
    <property type="evidence" value="ECO:0007669"/>
    <property type="project" value="UniProtKB-KW"/>
</dbReference>
<dbReference type="GO" id="GO:0006412">
    <property type="term" value="P:translation"/>
    <property type="evidence" value="ECO:0007669"/>
    <property type="project" value="UniProtKB-UniRule"/>
</dbReference>
<dbReference type="CDD" id="cd00403">
    <property type="entry name" value="Ribosomal_L1"/>
    <property type="match status" value="1"/>
</dbReference>
<dbReference type="FunFam" id="3.40.50.790:FF:000001">
    <property type="entry name" value="50S ribosomal protein L1"/>
    <property type="match status" value="1"/>
</dbReference>
<dbReference type="Gene3D" id="3.30.190.20">
    <property type="match status" value="1"/>
</dbReference>
<dbReference type="Gene3D" id="3.40.50.790">
    <property type="match status" value="1"/>
</dbReference>
<dbReference type="HAMAP" id="MF_01318_B">
    <property type="entry name" value="Ribosomal_uL1_B"/>
    <property type="match status" value="1"/>
</dbReference>
<dbReference type="InterPro" id="IPR005878">
    <property type="entry name" value="Ribosom_uL1_bac-type"/>
</dbReference>
<dbReference type="InterPro" id="IPR002143">
    <property type="entry name" value="Ribosomal_uL1"/>
</dbReference>
<dbReference type="InterPro" id="IPR023674">
    <property type="entry name" value="Ribosomal_uL1-like"/>
</dbReference>
<dbReference type="InterPro" id="IPR028364">
    <property type="entry name" value="Ribosomal_uL1/biogenesis"/>
</dbReference>
<dbReference type="InterPro" id="IPR016095">
    <property type="entry name" value="Ribosomal_uL1_3-a/b-sand"/>
</dbReference>
<dbReference type="InterPro" id="IPR023673">
    <property type="entry name" value="Ribosomal_uL1_CS"/>
</dbReference>
<dbReference type="NCBIfam" id="TIGR01169">
    <property type="entry name" value="rplA_bact"/>
    <property type="match status" value="1"/>
</dbReference>
<dbReference type="PANTHER" id="PTHR36427">
    <property type="entry name" value="54S RIBOSOMAL PROTEIN L1, MITOCHONDRIAL"/>
    <property type="match status" value="1"/>
</dbReference>
<dbReference type="PANTHER" id="PTHR36427:SF3">
    <property type="entry name" value="LARGE RIBOSOMAL SUBUNIT PROTEIN UL1M"/>
    <property type="match status" value="1"/>
</dbReference>
<dbReference type="Pfam" id="PF00687">
    <property type="entry name" value="Ribosomal_L1"/>
    <property type="match status" value="1"/>
</dbReference>
<dbReference type="PIRSF" id="PIRSF002155">
    <property type="entry name" value="Ribosomal_L1"/>
    <property type="match status" value="1"/>
</dbReference>
<dbReference type="SUPFAM" id="SSF56808">
    <property type="entry name" value="Ribosomal protein L1"/>
    <property type="match status" value="1"/>
</dbReference>
<dbReference type="PROSITE" id="PS01199">
    <property type="entry name" value="RIBOSOMAL_L1"/>
    <property type="match status" value="1"/>
</dbReference>
<reference key="1">
    <citation type="journal article" date="2002" name="Lancet">
        <title>Genome and virulence determinants of high virulence community-acquired MRSA.</title>
        <authorList>
            <person name="Baba T."/>
            <person name="Takeuchi F."/>
            <person name="Kuroda M."/>
            <person name="Yuzawa H."/>
            <person name="Aoki K."/>
            <person name="Oguchi A."/>
            <person name="Nagai Y."/>
            <person name="Iwama N."/>
            <person name="Asano K."/>
            <person name="Naimi T."/>
            <person name="Kuroda H."/>
            <person name="Cui L."/>
            <person name="Yamamoto K."/>
            <person name="Hiramatsu K."/>
        </authorList>
    </citation>
    <scope>NUCLEOTIDE SEQUENCE [LARGE SCALE GENOMIC DNA]</scope>
    <source>
        <strain>MW2</strain>
    </source>
</reference>
<accession>P66092</accession>
<accession>Q932F9</accession>
<feature type="chain" id="PRO_0000125735" description="Large ribosomal subunit protein uL1">
    <location>
        <begin position="1"/>
        <end position="230"/>
    </location>
</feature>
<name>RL1_STAAW</name>
<proteinExistence type="inferred from homology"/>
<gene>
    <name evidence="1" type="primary">rplA</name>
    <name type="ordered locus">MW0493</name>
</gene>
<evidence type="ECO:0000255" key="1">
    <source>
        <dbReference type="HAMAP-Rule" id="MF_01318"/>
    </source>
</evidence>
<evidence type="ECO:0000305" key="2"/>